<reference key="1">
    <citation type="journal article" date="2011" name="MBio">
        <title>Novel metabolic attributes of the genus Cyanothece, comprising a group of unicellular nitrogen-fixing Cyanobacteria.</title>
        <authorList>
            <person name="Bandyopadhyay A."/>
            <person name="Elvitigala T."/>
            <person name="Welsh E."/>
            <person name="Stockel J."/>
            <person name="Liberton M."/>
            <person name="Min H."/>
            <person name="Sherman L.A."/>
            <person name="Pakrasi H.B."/>
        </authorList>
    </citation>
    <scope>NUCLEOTIDE SEQUENCE [LARGE SCALE GENOMIC DNA]</scope>
    <source>
        <strain>PCC 7425 / ATCC 29141</strain>
    </source>
</reference>
<keyword id="KW-0093">Biotin biosynthesis</keyword>
<keyword id="KW-0663">Pyridoxal phosphate</keyword>
<keyword id="KW-0808">Transferase</keyword>
<sequence length="399" mass="42781">MDSHPYAWIEAALETVKRAHWYRSVQTIEGRPGAEVELAGQRVLNFASNDYLGLAGDQRLIRAAIQATEQLGTGSTGSRLLTGHRELHRQLERAIAQLKQTEDALVFSSGYLANLGTIAALVGPRDLILSDQYNHSSLKKGASLSGAKVLDYPHLDMGGLAELLQTHRSNYRRCLILTDTVFSMEGDVCPLPQLLAITTAHNAMVLVDEAHATGVLGATGAGAVEHWGCTDQTLIQVGTLSKALGSLGGYVAGTAVLIDFLRNRCPGWIYTTALSPADTAAALAAIAVVQSEPQRRIQLHENVQGVQAQLQNLPQLQEPRGRFRLLPSQSAILAVQMPDPATALEVGNALKQAGIFAPVIRPPTVPTSRLRLSLMATHTPDHCQRLGVAITTALARSLS</sequence>
<gene>
    <name type="primary">bioF</name>
    <name type="ordered locus">Cyan7425_0484</name>
</gene>
<name>BIOF_CYAP4</name>
<accession>B8HTV6</accession>
<proteinExistence type="inferred from homology"/>
<protein>
    <recommendedName>
        <fullName>Putative 8-amino-7-oxononanoate synthase</fullName>
        <shortName>AONS</shortName>
        <ecNumber>2.3.1.47</ecNumber>
    </recommendedName>
    <alternativeName>
        <fullName>7-keto-8-amino-pelargonic acid synthase</fullName>
        <shortName>7-KAP synthase</shortName>
    </alternativeName>
    <alternativeName>
        <fullName>8-amino-7-ketopelargonate synthase</fullName>
    </alternativeName>
</protein>
<comment type="function">
    <text evidence="1">Catalyzes the decarboxylative condensation of pimeloyl-[acyl-carrier protein] and L-alanine to produce 8-amino-7-oxononanoate (AON), [acyl-carrier protein], and carbon dioxide.</text>
</comment>
<comment type="catalytic activity">
    <reaction>
        <text>6-carboxyhexanoyl-[ACP] + L-alanine + H(+) = (8S)-8-amino-7-oxononanoate + holo-[ACP] + CO2</text>
        <dbReference type="Rhea" id="RHEA:42288"/>
        <dbReference type="Rhea" id="RHEA-COMP:9685"/>
        <dbReference type="Rhea" id="RHEA-COMP:9955"/>
        <dbReference type="ChEBI" id="CHEBI:15378"/>
        <dbReference type="ChEBI" id="CHEBI:16526"/>
        <dbReference type="ChEBI" id="CHEBI:57972"/>
        <dbReference type="ChEBI" id="CHEBI:64479"/>
        <dbReference type="ChEBI" id="CHEBI:78846"/>
        <dbReference type="ChEBI" id="CHEBI:149468"/>
        <dbReference type="EC" id="2.3.1.47"/>
    </reaction>
</comment>
<comment type="cofactor">
    <cofactor evidence="1">
        <name>pyridoxal 5'-phosphate</name>
        <dbReference type="ChEBI" id="CHEBI:597326"/>
    </cofactor>
</comment>
<comment type="pathway">
    <text>Cofactor biosynthesis; biotin biosynthesis.</text>
</comment>
<comment type="subunit">
    <text evidence="1">Homodimer.</text>
</comment>
<comment type="similarity">
    <text evidence="2">Belongs to the class-II pyridoxal-phosphate-dependent aminotransferase family. BioF subfamily.</text>
</comment>
<feature type="chain" id="PRO_0000380959" description="Putative 8-amino-7-oxononanoate synthase">
    <location>
        <begin position="1"/>
        <end position="399"/>
    </location>
</feature>
<feature type="binding site" evidence="1">
    <location>
        <position position="23"/>
    </location>
    <ligand>
        <name>substrate</name>
    </ligand>
</feature>
<feature type="binding site" evidence="1">
    <location>
        <begin position="110"/>
        <end position="111"/>
    </location>
    <ligand>
        <name>pyridoxal 5'-phosphate</name>
        <dbReference type="ChEBI" id="CHEBI:597326"/>
    </ligand>
</feature>
<feature type="binding site" evidence="1">
    <location>
        <position position="135"/>
    </location>
    <ligand>
        <name>substrate</name>
    </ligand>
</feature>
<feature type="binding site" evidence="1">
    <location>
        <position position="183"/>
    </location>
    <ligand>
        <name>pyridoxal 5'-phosphate</name>
        <dbReference type="ChEBI" id="CHEBI:597326"/>
    </ligand>
</feature>
<feature type="binding site" evidence="1">
    <location>
        <begin position="208"/>
        <end position="211"/>
    </location>
    <ligand>
        <name>pyridoxal 5'-phosphate</name>
        <dbReference type="ChEBI" id="CHEBI:597326"/>
    </ligand>
</feature>
<feature type="binding site" evidence="1">
    <location>
        <begin position="239"/>
        <end position="242"/>
    </location>
    <ligand>
        <name>pyridoxal 5'-phosphate</name>
        <dbReference type="ChEBI" id="CHEBI:597326"/>
    </ligand>
</feature>
<feature type="binding site" evidence="1">
    <location>
        <position position="364"/>
    </location>
    <ligand>
        <name>substrate</name>
    </ligand>
</feature>
<feature type="modified residue" description="N6-(pyridoxal phosphate)lysine" evidence="1">
    <location>
        <position position="242"/>
    </location>
</feature>
<dbReference type="EC" id="2.3.1.47"/>
<dbReference type="EMBL" id="CP001344">
    <property type="protein sequence ID" value="ACL42876.1"/>
    <property type="molecule type" value="Genomic_DNA"/>
</dbReference>
<dbReference type="SMR" id="B8HTV6"/>
<dbReference type="STRING" id="395961.Cyan7425_0484"/>
<dbReference type="KEGG" id="cyn:Cyan7425_0484"/>
<dbReference type="eggNOG" id="COG0156">
    <property type="taxonomic scope" value="Bacteria"/>
</dbReference>
<dbReference type="HOGENOM" id="CLU_015846_11_0_3"/>
<dbReference type="OrthoDB" id="9807157at2"/>
<dbReference type="UniPathway" id="UPA00078"/>
<dbReference type="GO" id="GO:0008710">
    <property type="term" value="F:8-amino-7-oxononanoate synthase activity"/>
    <property type="evidence" value="ECO:0007669"/>
    <property type="project" value="UniProtKB-EC"/>
</dbReference>
<dbReference type="GO" id="GO:0030170">
    <property type="term" value="F:pyridoxal phosphate binding"/>
    <property type="evidence" value="ECO:0007669"/>
    <property type="project" value="InterPro"/>
</dbReference>
<dbReference type="GO" id="GO:0009102">
    <property type="term" value="P:biotin biosynthetic process"/>
    <property type="evidence" value="ECO:0007669"/>
    <property type="project" value="UniProtKB-UniPathway"/>
</dbReference>
<dbReference type="CDD" id="cd06454">
    <property type="entry name" value="KBL_like"/>
    <property type="match status" value="1"/>
</dbReference>
<dbReference type="Gene3D" id="3.90.1150.10">
    <property type="entry name" value="Aspartate Aminotransferase, domain 1"/>
    <property type="match status" value="1"/>
</dbReference>
<dbReference type="Gene3D" id="3.40.640.10">
    <property type="entry name" value="Type I PLP-dependent aspartate aminotransferase-like (Major domain)"/>
    <property type="match status" value="1"/>
</dbReference>
<dbReference type="InterPro" id="IPR001917">
    <property type="entry name" value="Aminotrans_II_pyridoxalP_BS"/>
</dbReference>
<dbReference type="InterPro" id="IPR004839">
    <property type="entry name" value="Aminotransferase_I/II_large"/>
</dbReference>
<dbReference type="InterPro" id="IPR050087">
    <property type="entry name" value="AON_synthase_class-II"/>
</dbReference>
<dbReference type="InterPro" id="IPR004723">
    <property type="entry name" value="AONS_Archaea/Proteobacteria"/>
</dbReference>
<dbReference type="InterPro" id="IPR015424">
    <property type="entry name" value="PyrdxlP-dep_Trfase"/>
</dbReference>
<dbReference type="InterPro" id="IPR015421">
    <property type="entry name" value="PyrdxlP-dep_Trfase_major"/>
</dbReference>
<dbReference type="InterPro" id="IPR015422">
    <property type="entry name" value="PyrdxlP-dep_Trfase_small"/>
</dbReference>
<dbReference type="NCBIfam" id="TIGR00858">
    <property type="entry name" value="bioF"/>
    <property type="match status" value="1"/>
</dbReference>
<dbReference type="PANTHER" id="PTHR13693:SF100">
    <property type="entry name" value="8-AMINO-7-OXONONANOATE SYNTHASE"/>
    <property type="match status" value="1"/>
</dbReference>
<dbReference type="PANTHER" id="PTHR13693">
    <property type="entry name" value="CLASS II AMINOTRANSFERASE/8-AMINO-7-OXONONANOATE SYNTHASE"/>
    <property type="match status" value="1"/>
</dbReference>
<dbReference type="Pfam" id="PF00155">
    <property type="entry name" value="Aminotran_1_2"/>
    <property type="match status" value="1"/>
</dbReference>
<dbReference type="SUPFAM" id="SSF53383">
    <property type="entry name" value="PLP-dependent transferases"/>
    <property type="match status" value="1"/>
</dbReference>
<dbReference type="PROSITE" id="PS00599">
    <property type="entry name" value="AA_TRANSFER_CLASS_2"/>
    <property type="match status" value="1"/>
</dbReference>
<evidence type="ECO:0000250" key="1"/>
<evidence type="ECO:0000305" key="2"/>
<organism>
    <name type="scientific">Cyanothece sp. (strain PCC 7425 / ATCC 29141)</name>
    <dbReference type="NCBI Taxonomy" id="395961"/>
    <lineage>
        <taxon>Bacteria</taxon>
        <taxon>Bacillati</taxon>
        <taxon>Cyanobacteriota</taxon>
        <taxon>Cyanophyceae</taxon>
        <taxon>Gomontiellales</taxon>
        <taxon>Cyanothecaceae</taxon>
        <taxon>Cyanothece</taxon>
    </lineage>
</organism>